<name>NDHH_ANGEV</name>
<gene>
    <name evidence="1" type="primary">ndhH</name>
</gene>
<geneLocation type="chloroplast"/>
<feature type="chain" id="PRO_0000357964" description="NAD(P)H-quinone oxidoreductase subunit H, chloroplastic">
    <location>
        <begin position="1"/>
        <end position="393"/>
    </location>
</feature>
<dbReference type="EC" id="7.1.1.-" evidence="1"/>
<dbReference type="EMBL" id="DQ821119">
    <property type="protein sequence ID" value="ABG79656.1"/>
    <property type="molecule type" value="Genomic_DNA"/>
</dbReference>
<dbReference type="RefSeq" id="YP_001023757.1">
    <property type="nucleotide sequence ID" value="NC_008829.1"/>
</dbReference>
<dbReference type="SMR" id="A2T389"/>
<dbReference type="GeneID" id="4788169"/>
<dbReference type="GO" id="GO:0009535">
    <property type="term" value="C:chloroplast thylakoid membrane"/>
    <property type="evidence" value="ECO:0007669"/>
    <property type="project" value="UniProtKB-SubCell"/>
</dbReference>
<dbReference type="GO" id="GO:0051287">
    <property type="term" value="F:NAD binding"/>
    <property type="evidence" value="ECO:0007669"/>
    <property type="project" value="InterPro"/>
</dbReference>
<dbReference type="GO" id="GO:0016655">
    <property type="term" value="F:oxidoreductase activity, acting on NAD(P)H, quinone or similar compound as acceptor"/>
    <property type="evidence" value="ECO:0007669"/>
    <property type="project" value="UniProtKB-UniRule"/>
</dbReference>
<dbReference type="GO" id="GO:0048038">
    <property type="term" value="F:quinone binding"/>
    <property type="evidence" value="ECO:0007669"/>
    <property type="project" value="UniProtKB-KW"/>
</dbReference>
<dbReference type="GO" id="GO:0019684">
    <property type="term" value="P:photosynthesis, light reaction"/>
    <property type="evidence" value="ECO:0007669"/>
    <property type="project" value="UniProtKB-UniRule"/>
</dbReference>
<dbReference type="Gene3D" id="1.10.645.10">
    <property type="entry name" value="Cytochrome-c3 Hydrogenase, chain B"/>
    <property type="match status" value="1"/>
</dbReference>
<dbReference type="HAMAP" id="MF_01358">
    <property type="entry name" value="NDH1_NuoD"/>
    <property type="match status" value="1"/>
</dbReference>
<dbReference type="InterPro" id="IPR001135">
    <property type="entry name" value="NADH_Q_OxRdtase_suD"/>
</dbReference>
<dbReference type="InterPro" id="IPR014029">
    <property type="entry name" value="NADH_UbQ_OxRdtase_49kDa_CS"/>
</dbReference>
<dbReference type="InterPro" id="IPR022885">
    <property type="entry name" value="NDH1_su_D/H"/>
</dbReference>
<dbReference type="InterPro" id="IPR029014">
    <property type="entry name" value="NiFe-Hase_large"/>
</dbReference>
<dbReference type="NCBIfam" id="TIGR01962">
    <property type="entry name" value="NuoD"/>
    <property type="match status" value="1"/>
</dbReference>
<dbReference type="NCBIfam" id="NF004739">
    <property type="entry name" value="PRK06075.1"/>
    <property type="match status" value="1"/>
</dbReference>
<dbReference type="NCBIfam" id="NF005649">
    <property type="entry name" value="PRK07415.1"/>
    <property type="match status" value="1"/>
</dbReference>
<dbReference type="PANTHER" id="PTHR11993:SF10">
    <property type="entry name" value="NADH DEHYDROGENASE [UBIQUINONE] IRON-SULFUR PROTEIN 2, MITOCHONDRIAL"/>
    <property type="match status" value="1"/>
</dbReference>
<dbReference type="PANTHER" id="PTHR11993">
    <property type="entry name" value="NADH-UBIQUINONE OXIDOREDUCTASE 49 KDA SUBUNIT"/>
    <property type="match status" value="1"/>
</dbReference>
<dbReference type="Pfam" id="PF00346">
    <property type="entry name" value="Complex1_49kDa"/>
    <property type="match status" value="1"/>
</dbReference>
<dbReference type="SUPFAM" id="SSF56762">
    <property type="entry name" value="HydB/Nqo4-like"/>
    <property type="match status" value="1"/>
</dbReference>
<dbReference type="PROSITE" id="PS00535">
    <property type="entry name" value="COMPLEX1_49K"/>
    <property type="match status" value="1"/>
</dbReference>
<evidence type="ECO:0000255" key="1">
    <source>
        <dbReference type="HAMAP-Rule" id="MF_01358"/>
    </source>
</evidence>
<reference key="1">
    <citation type="journal article" date="2007" name="Am. Fern J.">
        <title>The complete plastid genome sequence of Angiopteris evecta (G. Forst.) Hoffm. (Marattiaceae).</title>
        <authorList>
            <person name="Roper J.M."/>
            <person name="Hansen S.K."/>
            <person name="Wolf P.G."/>
            <person name="Karol K.G."/>
            <person name="Mandoli D.F."/>
            <person name="Everett K.D.E."/>
            <person name="Kuehl J."/>
            <person name="Boore J.L."/>
        </authorList>
    </citation>
    <scope>NUCLEOTIDE SEQUENCE [LARGE SCALE GENOMIC DNA]</scope>
</reference>
<sequence>MTMLATKKDPMIVSMGPQHPSMHGVLRLIVTSDGENVIDCEPILGYLHRGMEKIAENRTIIQYLPYVTRWDYLATMFTEAITVNAPEKLANIQIPKRASYIRIIMLELSRIASHLLWLGPFMADVGAQTPFFYIFREREMIYDLFEAATGMRMMHNYFRIGGVAVDFPYGWVDKCLDFCDYFLPKVDEYEQLITNNPIFLKRVEGVGFIGREEAINWGLSGPMLRASGVRWDLRKVDHYECYDELDWQIQWQKEGDSLARYLVRIGEMRESVRIIQQALKVIPGGPYENLEARRLNQQKDSEWNDFDYQFISKKSSPTFKLPKQEHYVRIEAPKGELGIFLIGDDNVSPWRWKIRPPGFINLQILPQLVKGMKLADIMTILGSIDIIMGEVDR</sequence>
<comment type="function">
    <text evidence="1">NDH shuttles electrons from NAD(P)H:plastoquinone, via FMN and iron-sulfur (Fe-S) centers, to quinones in the photosynthetic chain and possibly in a chloroplast respiratory chain. The immediate electron acceptor for the enzyme in this species is believed to be plastoquinone. Couples the redox reaction to proton translocation, and thus conserves the redox energy in a proton gradient.</text>
</comment>
<comment type="catalytic activity">
    <reaction evidence="1">
        <text>a plastoquinone + NADH + (n+1) H(+)(in) = a plastoquinol + NAD(+) + n H(+)(out)</text>
        <dbReference type="Rhea" id="RHEA:42608"/>
        <dbReference type="Rhea" id="RHEA-COMP:9561"/>
        <dbReference type="Rhea" id="RHEA-COMP:9562"/>
        <dbReference type="ChEBI" id="CHEBI:15378"/>
        <dbReference type="ChEBI" id="CHEBI:17757"/>
        <dbReference type="ChEBI" id="CHEBI:57540"/>
        <dbReference type="ChEBI" id="CHEBI:57945"/>
        <dbReference type="ChEBI" id="CHEBI:62192"/>
    </reaction>
</comment>
<comment type="catalytic activity">
    <reaction evidence="1">
        <text>a plastoquinone + NADPH + (n+1) H(+)(in) = a plastoquinol + NADP(+) + n H(+)(out)</text>
        <dbReference type="Rhea" id="RHEA:42612"/>
        <dbReference type="Rhea" id="RHEA-COMP:9561"/>
        <dbReference type="Rhea" id="RHEA-COMP:9562"/>
        <dbReference type="ChEBI" id="CHEBI:15378"/>
        <dbReference type="ChEBI" id="CHEBI:17757"/>
        <dbReference type="ChEBI" id="CHEBI:57783"/>
        <dbReference type="ChEBI" id="CHEBI:58349"/>
        <dbReference type="ChEBI" id="CHEBI:62192"/>
    </reaction>
</comment>
<comment type="subunit">
    <text evidence="1">NDH is composed of at least 16 different subunits, 5 of which are encoded in the nucleus.</text>
</comment>
<comment type="subcellular location">
    <subcellularLocation>
        <location evidence="1">Plastid</location>
        <location evidence="1">Chloroplast thylakoid membrane</location>
        <topology evidence="1">Peripheral membrane protein</topology>
        <orientation evidence="1">Stromal side</orientation>
    </subcellularLocation>
</comment>
<comment type="similarity">
    <text evidence="1">Belongs to the complex I 49 kDa subunit family.</text>
</comment>
<organism>
    <name type="scientific">Angiopteris evecta</name>
    <name type="common">Mule's foot fern</name>
    <name type="synonym">Polypodium evectum</name>
    <dbReference type="NCBI Taxonomy" id="13825"/>
    <lineage>
        <taxon>Eukaryota</taxon>
        <taxon>Viridiplantae</taxon>
        <taxon>Streptophyta</taxon>
        <taxon>Embryophyta</taxon>
        <taxon>Tracheophyta</taxon>
        <taxon>Polypodiopsida</taxon>
        <taxon>Marattiidae</taxon>
        <taxon>Marattiales</taxon>
        <taxon>Marattiaceae</taxon>
        <taxon>Angiopteris</taxon>
    </lineage>
</organism>
<accession>A2T389</accession>
<protein>
    <recommendedName>
        <fullName evidence="1">NAD(P)H-quinone oxidoreductase subunit H, chloroplastic</fullName>
        <ecNumber evidence="1">7.1.1.-</ecNumber>
    </recommendedName>
    <alternativeName>
        <fullName>NAD(P)H dehydrogenase subunit H</fullName>
    </alternativeName>
    <alternativeName>
        <fullName evidence="1">NADH-plastoquinone oxidoreductase 49 kDa subunit</fullName>
    </alternativeName>
    <alternativeName>
        <fullName evidence="1">NADH-plastoquinone oxidoreductase subunit H</fullName>
    </alternativeName>
</protein>
<keyword id="KW-0150">Chloroplast</keyword>
<keyword id="KW-0472">Membrane</keyword>
<keyword id="KW-0520">NAD</keyword>
<keyword id="KW-0521">NADP</keyword>
<keyword id="KW-0934">Plastid</keyword>
<keyword id="KW-0618">Plastoquinone</keyword>
<keyword id="KW-0874">Quinone</keyword>
<keyword id="KW-0793">Thylakoid</keyword>
<keyword id="KW-1278">Translocase</keyword>
<keyword id="KW-0813">Transport</keyword>
<proteinExistence type="inferred from homology"/>